<dbReference type="EMBL" id="AM942759">
    <property type="protein sequence ID" value="CAR46115.1"/>
    <property type="molecule type" value="Genomic_DNA"/>
</dbReference>
<dbReference type="RefSeq" id="WP_004246534.1">
    <property type="nucleotide sequence ID" value="NC_010554.1"/>
</dbReference>
<dbReference type="SMR" id="B4F0S5"/>
<dbReference type="EnsemblBacteria" id="CAR46115">
    <property type="protein sequence ID" value="CAR46115"/>
    <property type="gene ID" value="PMI3112"/>
</dbReference>
<dbReference type="GeneID" id="6800134"/>
<dbReference type="KEGG" id="pmr:PMI3112"/>
<dbReference type="eggNOG" id="COG1526">
    <property type="taxonomic scope" value="Bacteria"/>
</dbReference>
<dbReference type="HOGENOM" id="CLU_056887_2_0_6"/>
<dbReference type="Proteomes" id="UP000008319">
    <property type="component" value="Chromosome"/>
</dbReference>
<dbReference type="GO" id="GO:0005737">
    <property type="term" value="C:cytoplasm"/>
    <property type="evidence" value="ECO:0007669"/>
    <property type="project" value="UniProtKB-SubCell"/>
</dbReference>
<dbReference type="GO" id="GO:0097163">
    <property type="term" value="F:sulfur carrier activity"/>
    <property type="evidence" value="ECO:0007669"/>
    <property type="project" value="UniProtKB-UniRule"/>
</dbReference>
<dbReference type="GO" id="GO:0016783">
    <property type="term" value="F:sulfurtransferase activity"/>
    <property type="evidence" value="ECO:0007669"/>
    <property type="project" value="InterPro"/>
</dbReference>
<dbReference type="GO" id="GO:0006777">
    <property type="term" value="P:Mo-molybdopterin cofactor biosynthetic process"/>
    <property type="evidence" value="ECO:0007669"/>
    <property type="project" value="UniProtKB-UniRule"/>
</dbReference>
<dbReference type="Gene3D" id="3.10.20.10">
    <property type="match status" value="1"/>
</dbReference>
<dbReference type="Gene3D" id="3.40.140.10">
    <property type="entry name" value="Cytidine Deaminase, domain 2"/>
    <property type="match status" value="1"/>
</dbReference>
<dbReference type="HAMAP" id="MF_00187">
    <property type="entry name" value="FdhD"/>
    <property type="match status" value="1"/>
</dbReference>
<dbReference type="InterPro" id="IPR016193">
    <property type="entry name" value="Cytidine_deaminase-like"/>
</dbReference>
<dbReference type="InterPro" id="IPR003786">
    <property type="entry name" value="FdhD"/>
</dbReference>
<dbReference type="NCBIfam" id="TIGR00129">
    <property type="entry name" value="fdhD_narQ"/>
    <property type="match status" value="1"/>
</dbReference>
<dbReference type="PANTHER" id="PTHR30592">
    <property type="entry name" value="FORMATE DEHYDROGENASE"/>
    <property type="match status" value="1"/>
</dbReference>
<dbReference type="PANTHER" id="PTHR30592:SF1">
    <property type="entry name" value="SULFUR CARRIER PROTEIN FDHD"/>
    <property type="match status" value="1"/>
</dbReference>
<dbReference type="Pfam" id="PF02634">
    <property type="entry name" value="FdhD-NarQ"/>
    <property type="match status" value="1"/>
</dbReference>
<dbReference type="PIRSF" id="PIRSF015626">
    <property type="entry name" value="FdhD"/>
    <property type="match status" value="1"/>
</dbReference>
<dbReference type="SUPFAM" id="SSF53927">
    <property type="entry name" value="Cytidine deaminase-like"/>
    <property type="match status" value="1"/>
</dbReference>
<organism>
    <name type="scientific">Proteus mirabilis (strain HI4320)</name>
    <dbReference type="NCBI Taxonomy" id="529507"/>
    <lineage>
        <taxon>Bacteria</taxon>
        <taxon>Pseudomonadati</taxon>
        <taxon>Pseudomonadota</taxon>
        <taxon>Gammaproteobacteria</taxon>
        <taxon>Enterobacterales</taxon>
        <taxon>Morganellaceae</taxon>
        <taxon>Proteus</taxon>
    </lineage>
</organism>
<reference key="1">
    <citation type="journal article" date="2008" name="J. Bacteriol.">
        <title>Complete genome sequence of uropathogenic Proteus mirabilis, a master of both adherence and motility.</title>
        <authorList>
            <person name="Pearson M.M."/>
            <person name="Sebaihia M."/>
            <person name="Churcher C."/>
            <person name="Quail M.A."/>
            <person name="Seshasayee A.S."/>
            <person name="Luscombe N.M."/>
            <person name="Abdellah Z."/>
            <person name="Arrosmith C."/>
            <person name="Atkin B."/>
            <person name="Chillingworth T."/>
            <person name="Hauser H."/>
            <person name="Jagels K."/>
            <person name="Moule S."/>
            <person name="Mungall K."/>
            <person name="Norbertczak H."/>
            <person name="Rabbinowitsch E."/>
            <person name="Walker D."/>
            <person name="Whithead S."/>
            <person name="Thomson N.R."/>
            <person name="Rather P.N."/>
            <person name="Parkhill J."/>
            <person name="Mobley H.L.T."/>
        </authorList>
    </citation>
    <scope>NUCLEOTIDE SEQUENCE [LARGE SCALE GENOMIC DNA]</scope>
    <source>
        <strain>HI4320</strain>
    </source>
</reference>
<gene>
    <name evidence="1" type="primary">fdhD</name>
    <name type="ordered locus">PMI3112</name>
</gene>
<comment type="function">
    <text evidence="1">Required for formate dehydrogenase (FDH) activity. Acts as a sulfur carrier protein that transfers sulfur from IscS to the molybdenum cofactor prior to its insertion into FDH.</text>
</comment>
<comment type="subcellular location">
    <subcellularLocation>
        <location evidence="1">Cytoplasm</location>
    </subcellularLocation>
</comment>
<comment type="similarity">
    <text evidence="1">Belongs to the FdhD family.</text>
</comment>
<protein>
    <recommendedName>
        <fullName evidence="1">Sulfur carrier protein FdhD</fullName>
    </recommendedName>
</protein>
<feature type="chain" id="PRO_1000098785" description="Sulfur carrier protein FdhD">
    <location>
        <begin position="1"/>
        <end position="276"/>
    </location>
</feature>
<feature type="active site" description="Cysteine persulfide intermediate" evidence="1">
    <location>
        <position position="122"/>
    </location>
</feature>
<feature type="binding site" evidence="1">
    <location>
        <begin position="259"/>
        <end position="264"/>
    </location>
    <ligand>
        <name>Mo-bis(molybdopterin guanine dinucleotide)</name>
        <dbReference type="ChEBI" id="CHEBI:60539"/>
    </ligand>
</feature>
<accession>B4F0S5</accession>
<name>FDHD_PROMH</name>
<keyword id="KW-0963">Cytoplasm</keyword>
<keyword id="KW-0501">Molybdenum cofactor biosynthesis</keyword>
<keyword id="KW-1185">Reference proteome</keyword>
<sequence>MDETKSTNLLTKRVIVGIDQTTVQHKGSLNQAEQDYIALEVPVALVYNGISHVVMMASPKNLELFAVGFSLSEGIIGSSNEIRSIEIVESCHGGTEVQIELSSRRFMQLKERRRSMAGRTGCGICGTEQLAEIFRPIAPLPFTQTFSLSLLDNALEQLKTVQEIGELTGCTHAAAWLSPEGQLQGGCEDVGRHVALDKLIGLKTQQKWTEGAILVSSRASYEMVQKSAMCGAEILFAVSAATSLAVEVANQYNLTLVGFCRRGRATVFTHPQRLTD</sequence>
<evidence type="ECO:0000255" key="1">
    <source>
        <dbReference type="HAMAP-Rule" id="MF_00187"/>
    </source>
</evidence>
<proteinExistence type="inferred from homology"/>